<keyword id="KW-0067">ATP-binding</keyword>
<keyword id="KW-0456">Lyase</keyword>
<keyword id="KW-0520">NAD</keyword>
<keyword id="KW-0521">NADP</keyword>
<keyword id="KW-0547">Nucleotide-binding</keyword>
<keyword id="KW-0597">Phosphoprotein</keyword>
<keyword id="KW-1185">Reference proteome</keyword>
<gene>
    <name type="ORF">Cin.36927</name>
</gene>
<protein>
    <recommendedName>
        <fullName evidence="1">ATP-dependent (S)-NAD(P)H-hydrate dehydratase</fullName>
        <ecNumber evidence="1">4.2.1.93</ecNumber>
    </recommendedName>
    <alternativeName>
        <fullName evidence="1">ATP-dependent NAD(P)HX dehydratase</fullName>
    </alternativeName>
</protein>
<evidence type="ECO:0000255" key="1">
    <source>
        <dbReference type="HAMAP-Rule" id="MF_03157"/>
    </source>
</evidence>
<dbReference type="EC" id="4.2.1.93" evidence="1"/>
<dbReference type="SMR" id="F6RCC2"/>
<dbReference type="FunCoup" id="F6RCC2">
    <property type="interactions" value="55"/>
</dbReference>
<dbReference type="STRING" id="7719.ENSCINP00000006335"/>
<dbReference type="eggNOG" id="KOG3974">
    <property type="taxonomic scope" value="Eukaryota"/>
</dbReference>
<dbReference type="InParanoid" id="F6RCC2"/>
<dbReference type="Proteomes" id="UP000008144">
    <property type="component" value="Unplaced"/>
</dbReference>
<dbReference type="GO" id="GO:0005524">
    <property type="term" value="F:ATP binding"/>
    <property type="evidence" value="ECO:0007669"/>
    <property type="project" value="UniProtKB-KW"/>
</dbReference>
<dbReference type="GO" id="GO:0047453">
    <property type="term" value="F:ATP-dependent NAD(P)H-hydrate dehydratase activity"/>
    <property type="evidence" value="ECO:0000318"/>
    <property type="project" value="GO_Central"/>
</dbReference>
<dbReference type="GO" id="GO:0110051">
    <property type="term" value="P:metabolite repair"/>
    <property type="evidence" value="ECO:0000318"/>
    <property type="project" value="GO_Central"/>
</dbReference>
<dbReference type="GO" id="GO:0046496">
    <property type="term" value="P:nicotinamide nucleotide metabolic process"/>
    <property type="evidence" value="ECO:0007669"/>
    <property type="project" value="UniProtKB-UniRule"/>
</dbReference>
<dbReference type="CDD" id="cd01171">
    <property type="entry name" value="YXKO-related"/>
    <property type="match status" value="1"/>
</dbReference>
<dbReference type="FunFam" id="3.40.1190.20:FF:000028">
    <property type="entry name" value="ATP-dependent (S)-NAD(P)H-hydrate dehydratase"/>
    <property type="match status" value="1"/>
</dbReference>
<dbReference type="Gene3D" id="3.40.1190.20">
    <property type="match status" value="1"/>
</dbReference>
<dbReference type="HAMAP" id="MF_01965">
    <property type="entry name" value="NADHX_dehydratase"/>
    <property type="match status" value="1"/>
</dbReference>
<dbReference type="InterPro" id="IPR000631">
    <property type="entry name" value="CARKD"/>
</dbReference>
<dbReference type="InterPro" id="IPR029056">
    <property type="entry name" value="Ribokinase-like"/>
</dbReference>
<dbReference type="NCBIfam" id="TIGR00196">
    <property type="entry name" value="yjeF_cterm"/>
    <property type="match status" value="1"/>
</dbReference>
<dbReference type="PANTHER" id="PTHR12592:SF0">
    <property type="entry name" value="ATP-DEPENDENT (S)-NAD(P)H-HYDRATE DEHYDRATASE"/>
    <property type="match status" value="1"/>
</dbReference>
<dbReference type="PANTHER" id="PTHR12592">
    <property type="entry name" value="ATP-DEPENDENT (S)-NAD(P)H-HYDRATE DEHYDRATASE FAMILY MEMBER"/>
    <property type="match status" value="1"/>
</dbReference>
<dbReference type="Pfam" id="PF01256">
    <property type="entry name" value="Carb_kinase"/>
    <property type="match status" value="1"/>
</dbReference>
<dbReference type="SUPFAM" id="SSF53613">
    <property type="entry name" value="Ribokinase-like"/>
    <property type="match status" value="1"/>
</dbReference>
<dbReference type="PROSITE" id="PS51383">
    <property type="entry name" value="YJEF_C_3"/>
    <property type="match status" value="1"/>
</dbReference>
<name>NNRD_CIOIN</name>
<reference key="1">
    <citation type="journal article" date="2002" name="Science">
        <title>The draft genome of Ciona intestinalis: insights into chordate and vertebrate origins.</title>
        <authorList>
            <person name="Dehal P."/>
            <person name="Satou Y."/>
            <person name="Campbell R.K."/>
            <person name="Chapman J."/>
            <person name="Degnan B."/>
            <person name="De Tomaso A."/>
            <person name="Davidson B."/>
            <person name="Di Gregorio A."/>
            <person name="Gelpke M."/>
            <person name="Goodstein D.M."/>
            <person name="Harafuji N."/>
            <person name="Hastings K.E."/>
            <person name="Ho I."/>
            <person name="Hotta K."/>
            <person name="Huang W."/>
            <person name="Kawashima T."/>
            <person name="Lemaire P."/>
            <person name="Martinez D."/>
            <person name="Meinertzhagen I.A."/>
            <person name="Necula S."/>
            <person name="Nonaka M."/>
            <person name="Putnam N."/>
            <person name="Rash S."/>
            <person name="Saiga H."/>
            <person name="Satake M."/>
            <person name="Terry A."/>
            <person name="Yamada L."/>
            <person name="Wang H.G."/>
            <person name="Awazu S."/>
            <person name="Azumi K."/>
            <person name="Boore J."/>
            <person name="Branno M."/>
            <person name="Chin-Bow S."/>
            <person name="DeSantis R."/>
            <person name="Doyle S."/>
            <person name="Francino P."/>
            <person name="Keys D.N."/>
            <person name="Haga S."/>
            <person name="Hayashi H."/>
            <person name="Hino K."/>
            <person name="Imai K.S."/>
            <person name="Inaba K."/>
            <person name="Kano S."/>
            <person name="Kobayashi K."/>
            <person name="Kobayashi M."/>
            <person name="Lee B.I."/>
            <person name="Makabe K.W."/>
            <person name="Manohar C."/>
            <person name="Matassi G."/>
            <person name="Medina M."/>
            <person name="Mochizuki Y."/>
            <person name="Mount S."/>
            <person name="Morishita T."/>
            <person name="Miura S."/>
            <person name="Nakayama A."/>
            <person name="Nishizaka S."/>
            <person name="Nomoto H."/>
            <person name="Ohta F."/>
            <person name="Oishi K."/>
            <person name="Rigoutsos I."/>
            <person name="Sano M."/>
            <person name="Sasaki A."/>
            <person name="Sasakura Y."/>
            <person name="Shoguchi E."/>
            <person name="Shin-i T."/>
            <person name="Spagnuolo A."/>
            <person name="Stainier D."/>
            <person name="Suzuki M.M."/>
            <person name="Tassy O."/>
            <person name="Takatori N."/>
            <person name="Tokuoka M."/>
            <person name="Yagi K."/>
            <person name="Yoshizaki F."/>
            <person name="Wada S."/>
            <person name="Zhang C."/>
            <person name="Hyatt P.D."/>
            <person name="Larimer F."/>
            <person name="Detter C."/>
            <person name="Doggett N."/>
            <person name="Glavina T."/>
            <person name="Hawkins T."/>
            <person name="Richardson P."/>
            <person name="Lucas S."/>
            <person name="Kohara Y."/>
            <person name="Levine M."/>
            <person name="Satoh N."/>
            <person name="Rokhsar D.S."/>
        </authorList>
    </citation>
    <scope>NUCLEOTIDE SEQUENCE [LARGE SCALE GENOMIC DNA]</scope>
</reference>
<comment type="function">
    <text evidence="1">Catalyzes the dehydration of the S-form of NAD(P)HX at the expense of ATP, which is converted to ADP. Together with NAD(P)HX epimerase, which catalyzes the epimerization of the S- and R-forms, the enzyme allows the repair of both epimers of NAD(P)HX, a damaged form of NAD(P)H that is a result of enzymatic or heat-dependent hydration.</text>
</comment>
<comment type="catalytic activity">
    <reaction evidence="1">
        <text>(6S)-NADHX + ATP = ADP + phosphate + NADH + H(+)</text>
        <dbReference type="Rhea" id="RHEA:19017"/>
        <dbReference type="ChEBI" id="CHEBI:15378"/>
        <dbReference type="ChEBI" id="CHEBI:30616"/>
        <dbReference type="ChEBI" id="CHEBI:43474"/>
        <dbReference type="ChEBI" id="CHEBI:57945"/>
        <dbReference type="ChEBI" id="CHEBI:64074"/>
        <dbReference type="ChEBI" id="CHEBI:456216"/>
        <dbReference type="EC" id="4.2.1.93"/>
    </reaction>
</comment>
<comment type="catalytic activity">
    <reaction>
        <text>(6S)-NADPHX + ATP = ADP + phosphate + NADPH + H(+)</text>
        <dbReference type="Rhea" id="RHEA:32231"/>
        <dbReference type="ChEBI" id="CHEBI:15378"/>
        <dbReference type="ChEBI" id="CHEBI:30616"/>
        <dbReference type="ChEBI" id="CHEBI:43474"/>
        <dbReference type="ChEBI" id="CHEBI:57783"/>
        <dbReference type="ChEBI" id="CHEBI:64076"/>
        <dbReference type="ChEBI" id="CHEBI:456216"/>
        <dbReference type="EC" id="4.2.1.93"/>
    </reaction>
</comment>
<comment type="cofactor">
    <cofactor evidence="1">
        <name>Mg(2+)</name>
        <dbReference type="ChEBI" id="CHEBI:18420"/>
    </cofactor>
</comment>
<comment type="similarity">
    <text evidence="1">Belongs to the NnrD/CARKD family.</text>
</comment>
<proteinExistence type="inferred from homology"/>
<sequence length="359" mass="38630">MSTILFYTRALIIGATKSQGVFGKTGTLVANISSNRGIISIVPRTNPPQKLLKMQEEENSLLEEARKVVPALSFGKHKGQAGRVGVIGGSEEYTGAPYFAAISAMKAGADLAHVFCSKSASTVIKSYSPELIVHPLLDVPNAVTLLDEWLPRIHSHVIGPGLGRVDATLNTVKEILIKLKKQEIPIVIDADGLFLITRDPSIIHGYTKAILTPNVVEFQRLSKSMNLNWESKDLNGSIMETVALSKALGGVTIVRKGEVDIVAAGDEVVTMDEIGSPRRCGGQGDLLSGVMALFSYWTHNSTCTPPPTLLAGYAACFLTKRCANQAFQKHGRSTATTDLISEINSVFVNNFENPTDPKS</sequence>
<accession>F6RCC2</accession>
<feature type="chain" id="PRO_0000416162" description="ATP-dependent (S)-NAD(P)H-hydrate dehydratase">
    <location>
        <begin position="1"/>
        <end position="359"/>
    </location>
</feature>
<feature type="domain" description="YjeF C-terminal" evidence="1">
    <location>
        <begin position="61"/>
        <end position="350"/>
    </location>
</feature>
<feature type="binding site" evidence="1">
    <location>
        <position position="161"/>
    </location>
    <ligand>
        <name>(6S)-NADPHX</name>
        <dbReference type="ChEBI" id="CHEBI:64076"/>
    </ligand>
</feature>
<feature type="binding site" evidence="1">
    <location>
        <begin position="214"/>
        <end position="220"/>
    </location>
    <ligand>
        <name>(6S)-NADPHX</name>
        <dbReference type="ChEBI" id="CHEBI:64076"/>
    </ligand>
</feature>
<feature type="binding site" evidence="1">
    <location>
        <begin position="256"/>
        <end position="260"/>
    </location>
    <ligand>
        <name>ATP</name>
        <dbReference type="ChEBI" id="CHEBI:30616"/>
    </ligand>
</feature>
<feature type="binding site" evidence="1">
    <location>
        <begin position="275"/>
        <end position="284"/>
    </location>
    <ligand>
        <name>ATP</name>
        <dbReference type="ChEBI" id="CHEBI:30616"/>
    </ligand>
</feature>
<feature type="binding site" evidence="1">
    <location>
        <position position="285"/>
    </location>
    <ligand>
        <name>(6S)-NADPHX</name>
        <dbReference type="ChEBI" id="CHEBI:64076"/>
    </ligand>
</feature>
<organism>
    <name type="scientific">Ciona intestinalis</name>
    <name type="common">Transparent sea squirt</name>
    <name type="synonym">Ascidia intestinalis</name>
    <dbReference type="NCBI Taxonomy" id="7719"/>
    <lineage>
        <taxon>Eukaryota</taxon>
        <taxon>Metazoa</taxon>
        <taxon>Chordata</taxon>
        <taxon>Tunicata</taxon>
        <taxon>Ascidiacea</taxon>
        <taxon>Phlebobranchia</taxon>
        <taxon>Cionidae</taxon>
        <taxon>Ciona</taxon>
    </lineage>
</organism>